<reference key="1">
    <citation type="journal article" date="1999" name="Nature">
        <title>Sequence and analysis of chromosome 4 of the plant Arabidopsis thaliana.</title>
        <authorList>
            <person name="Mayer K.F.X."/>
            <person name="Schueller C."/>
            <person name="Wambutt R."/>
            <person name="Murphy G."/>
            <person name="Volckaert G."/>
            <person name="Pohl T."/>
            <person name="Duesterhoeft A."/>
            <person name="Stiekema W."/>
            <person name="Entian K.-D."/>
            <person name="Terryn N."/>
            <person name="Harris B."/>
            <person name="Ansorge W."/>
            <person name="Brandt P."/>
            <person name="Grivell L.A."/>
            <person name="Rieger M."/>
            <person name="Weichselgartner M."/>
            <person name="de Simone V."/>
            <person name="Obermaier B."/>
            <person name="Mache R."/>
            <person name="Mueller M."/>
            <person name="Kreis M."/>
            <person name="Delseny M."/>
            <person name="Puigdomenech P."/>
            <person name="Watson M."/>
            <person name="Schmidtheini T."/>
            <person name="Reichert B."/>
            <person name="Portetelle D."/>
            <person name="Perez-Alonso M."/>
            <person name="Boutry M."/>
            <person name="Bancroft I."/>
            <person name="Vos P."/>
            <person name="Hoheisel J."/>
            <person name="Zimmermann W."/>
            <person name="Wedler H."/>
            <person name="Ridley P."/>
            <person name="Langham S.-A."/>
            <person name="McCullagh B."/>
            <person name="Bilham L."/>
            <person name="Robben J."/>
            <person name="van der Schueren J."/>
            <person name="Grymonprez B."/>
            <person name="Chuang Y.-J."/>
            <person name="Vandenbussche F."/>
            <person name="Braeken M."/>
            <person name="Weltjens I."/>
            <person name="Voet M."/>
            <person name="Bastiaens I."/>
            <person name="Aert R."/>
            <person name="Defoor E."/>
            <person name="Weitzenegger T."/>
            <person name="Bothe G."/>
            <person name="Ramsperger U."/>
            <person name="Hilbert H."/>
            <person name="Braun M."/>
            <person name="Holzer E."/>
            <person name="Brandt A."/>
            <person name="Peters S."/>
            <person name="van Staveren M."/>
            <person name="Dirkse W."/>
            <person name="Mooijman P."/>
            <person name="Klein Lankhorst R."/>
            <person name="Rose M."/>
            <person name="Hauf J."/>
            <person name="Koetter P."/>
            <person name="Berneiser S."/>
            <person name="Hempel S."/>
            <person name="Feldpausch M."/>
            <person name="Lamberth S."/>
            <person name="Van den Daele H."/>
            <person name="De Keyser A."/>
            <person name="Buysshaert C."/>
            <person name="Gielen J."/>
            <person name="Villarroel R."/>
            <person name="De Clercq R."/>
            <person name="van Montagu M."/>
            <person name="Rogers J."/>
            <person name="Cronin A."/>
            <person name="Quail M.A."/>
            <person name="Bray-Allen S."/>
            <person name="Clark L."/>
            <person name="Doggett J."/>
            <person name="Hall S."/>
            <person name="Kay M."/>
            <person name="Lennard N."/>
            <person name="McLay K."/>
            <person name="Mayes R."/>
            <person name="Pettett A."/>
            <person name="Rajandream M.A."/>
            <person name="Lyne M."/>
            <person name="Benes V."/>
            <person name="Rechmann S."/>
            <person name="Borkova D."/>
            <person name="Bloecker H."/>
            <person name="Scharfe M."/>
            <person name="Grimm M."/>
            <person name="Loehnert T.-H."/>
            <person name="Dose S."/>
            <person name="de Haan M."/>
            <person name="Maarse A.C."/>
            <person name="Schaefer M."/>
            <person name="Mueller-Auer S."/>
            <person name="Gabel C."/>
            <person name="Fuchs M."/>
            <person name="Fartmann B."/>
            <person name="Granderath K."/>
            <person name="Dauner D."/>
            <person name="Herzl A."/>
            <person name="Neumann S."/>
            <person name="Argiriou A."/>
            <person name="Vitale D."/>
            <person name="Liguori R."/>
            <person name="Piravandi E."/>
            <person name="Massenet O."/>
            <person name="Quigley F."/>
            <person name="Clabauld G."/>
            <person name="Muendlein A."/>
            <person name="Felber R."/>
            <person name="Schnabl S."/>
            <person name="Hiller R."/>
            <person name="Schmidt W."/>
            <person name="Lecharny A."/>
            <person name="Aubourg S."/>
            <person name="Chefdor F."/>
            <person name="Cooke R."/>
            <person name="Berger C."/>
            <person name="Monfort A."/>
            <person name="Casacuberta E."/>
            <person name="Gibbons T."/>
            <person name="Weber N."/>
            <person name="Vandenbol M."/>
            <person name="Bargues M."/>
            <person name="Terol J."/>
            <person name="Torres A."/>
            <person name="Perez-Perez A."/>
            <person name="Purnelle B."/>
            <person name="Bent E."/>
            <person name="Johnson S."/>
            <person name="Tacon D."/>
            <person name="Jesse T."/>
            <person name="Heijnen L."/>
            <person name="Schwarz S."/>
            <person name="Scholler P."/>
            <person name="Heber S."/>
            <person name="Francs P."/>
            <person name="Bielke C."/>
            <person name="Frishman D."/>
            <person name="Haase D."/>
            <person name="Lemcke K."/>
            <person name="Mewes H.-W."/>
            <person name="Stocker S."/>
            <person name="Zaccaria P."/>
            <person name="Bevan M."/>
            <person name="Wilson R.K."/>
            <person name="de la Bastide M."/>
            <person name="Habermann K."/>
            <person name="Parnell L."/>
            <person name="Dedhia N."/>
            <person name="Gnoj L."/>
            <person name="Schutz K."/>
            <person name="Huang E."/>
            <person name="Spiegel L."/>
            <person name="Sekhon M."/>
            <person name="Murray J."/>
            <person name="Sheet P."/>
            <person name="Cordes M."/>
            <person name="Abu-Threideh J."/>
            <person name="Stoneking T."/>
            <person name="Kalicki J."/>
            <person name="Graves T."/>
            <person name="Harmon G."/>
            <person name="Edwards J."/>
            <person name="Latreille P."/>
            <person name="Courtney L."/>
            <person name="Cloud J."/>
            <person name="Abbott A."/>
            <person name="Scott K."/>
            <person name="Johnson D."/>
            <person name="Minx P."/>
            <person name="Bentley D."/>
            <person name="Fulton B."/>
            <person name="Miller N."/>
            <person name="Greco T."/>
            <person name="Kemp K."/>
            <person name="Kramer J."/>
            <person name="Fulton L."/>
            <person name="Mardis E."/>
            <person name="Dante M."/>
            <person name="Pepin K."/>
            <person name="Hillier L.W."/>
            <person name="Nelson J."/>
            <person name="Spieth J."/>
            <person name="Ryan E."/>
            <person name="Andrews S."/>
            <person name="Geisel C."/>
            <person name="Layman D."/>
            <person name="Du H."/>
            <person name="Ali J."/>
            <person name="Berghoff A."/>
            <person name="Jones K."/>
            <person name="Drone K."/>
            <person name="Cotton M."/>
            <person name="Joshu C."/>
            <person name="Antonoiu B."/>
            <person name="Zidanic M."/>
            <person name="Strong C."/>
            <person name="Sun H."/>
            <person name="Lamar B."/>
            <person name="Yordan C."/>
            <person name="Ma P."/>
            <person name="Zhong J."/>
            <person name="Preston R."/>
            <person name="Vil D."/>
            <person name="Shekher M."/>
            <person name="Matero A."/>
            <person name="Shah R."/>
            <person name="Swaby I.K."/>
            <person name="O'Shaughnessy A."/>
            <person name="Rodriguez M."/>
            <person name="Hoffman J."/>
            <person name="Till S."/>
            <person name="Granat S."/>
            <person name="Shohdy N."/>
            <person name="Hasegawa A."/>
            <person name="Hameed A."/>
            <person name="Lodhi M."/>
            <person name="Johnson A."/>
            <person name="Chen E."/>
            <person name="Marra M.A."/>
            <person name="Martienssen R."/>
            <person name="McCombie W.R."/>
        </authorList>
    </citation>
    <scope>NUCLEOTIDE SEQUENCE [LARGE SCALE GENOMIC DNA]</scope>
    <source>
        <strain>cv. Columbia</strain>
    </source>
</reference>
<reference key="2">
    <citation type="journal article" date="2017" name="Plant J.">
        <title>Araport11: a complete reannotation of the Arabidopsis thaliana reference genome.</title>
        <authorList>
            <person name="Cheng C.Y."/>
            <person name="Krishnakumar V."/>
            <person name="Chan A.P."/>
            <person name="Thibaud-Nissen F."/>
            <person name="Schobel S."/>
            <person name="Town C.D."/>
        </authorList>
    </citation>
    <scope>GENOME REANNOTATION</scope>
    <source>
        <strain>cv. Columbia</strain>
    </source>
</reference>
<reference key="3">
    <citation type="journal article" date="2003" name="Science">
        <title>Empirical analysis of transcriptional activity in the Arabidopsis genome.</title>
        <authorList>
            <person name="Yamada K."/>
            <person name="Lim J."/>
            <person name="Dale J.M."/>
            <person name="Chen H."/>
            <person name="Shinn P."/>
            <person name="Palm C.J."/>
            <person name="Southwick A.M."/>
            <person name="Wu H.C."/>
            <person name="Kim C.J."/>
            <person name="Nguyen M."/>
            <person name="Pham P.K."/>
            <person name="Cheuk R.F."/>
            <person name="Karlin-Newmann G."/>
            <person name="Liu S.X."/>
            <person name="Lam B."/>
            <person name="Sakano H."/>
            <person name="Wu T."/>
            <person name="Yu G."/>
            <person name="Miranda M."/>
            <person name="Quach H.L."/>
            <person name="Tripp M."/>
            <person name="Chang C.H."/>
            <person name="Lee J.M."/>
            <person name="Toriumi M.J."/>
            <person name="Chan M.M."/>
            <person name="Tang C.C."/>
            <person name="Onodera C.S."/>
            <person name="Deng J.M."/>
            <person name="Akiyama K."/>
            <person name="Ansari Y."/>
            <person name="Arakawa T."/>
            <person name="Banh J."/>
            <person name="Banno F."/>
            <person name="Bowser L."/>
            <person name="Brooks S.Y."/>
            <person name="Carninci P."/>
            <person name="Chao Q."/>
            <person name="Choy N."/>
            <person name="Enju A."/>
            <person name="Goldsmith A.D."/>
            <person name="Gurjal M."/>
            <person name="Hansen N.F."/>
            <person name="Hayashizaki Y."/>
            <person name="Johnson-Hopson C."/>
            <person name="Hsuan V.W."/>
            <person name="Iida K."/>
            <person name="Karnes M."/>
            <person name="Khan S."/>
            <person name="Koesema E."/>
            <person name="Ishida J."/>
            <person name="Jiang P.X."/>
            <person name="Jones T."/>
            <person name="Kawai J."/>
            <person name="Kamiya A."/>
            <person name="Meyers C."/>
            <person name="Nakajima M."/>
            <person name="Narusaka M."/>
            <person name="Seki M."/>
            <person name="Sakurai T."/>
            <person name="Satou M."/>
            <person name="Tamse R."/>
            <person name="Vaysberg M."/>
            <person name="Wallender E.K."/>
            <person name="Wong C."/>
            <person name="Yamamura Y."/>
            <person name="Yuan S."/>
            <person name="Shinozaki K."/>
            <person name="Davis R.W."/>
            <person name="Theologis A."/>
            <person name="Ecker J.R."/>
        </authorList>
    </citation>
    <scope>NUCLEOTIDE SEQUENCE [LARGE SCALE MRNA]</scope>
    <source>
        <strain>cv. Columbia</strain>
    </source>
</reference>
<reference key="4">
    <citation type="submission" date="2002-03" db="EMBL/GenBank/DDBJ databases">
        <title>Full-length cDNA from Arabidopsis thaliana.</title>
        <authorList>
            <person name="Brover V.V."/>
            <person name="Troukhan M.E."/>
            <person name="Alexandrov N.A."/>
            <person name="Lu Y.-P."/>
            <person name="Flavell R.B."/>
            <person name="Feldmann K.A."/>
        </authorList>
    </citation>
    <scope>NUCLEOTIDE SEQUENCE [LARGE SCALE MRNA]</scope>
</reference>
<reference key="5">
    <citation type="journal article" date="2009" name="Biosci. Biotechnol. Biochem.">
        <title>Genome-wide identification, structure and expression studies, and mutant collection of 22 early nodulin-like protein genes in Arabidopsis.</title>
        <authorList>
            <person name="Mashiguchi K."/>
            <person name="Asami T."/>
            <person name="Suzuki Y."/>
        </authorList>
    </citation>
    <scope>GENE FAMILY</scope>
    <scope>NOMENCLATURE</scope>
    <source>
        <strain>cv. Columbia</strain>
    </source>
</reference>
<reference key="6">
    <citation type="journal article" date="2014" name="Plant Cell Physiol.">
        <title>Emerging functions of nodulin-like proteins in non-nodulating plant species.</title>
        <authorList>
            <person name="Denance N."/>
            <person name="Szurek B."/>
            <person name="Noel L.D."/>
        </authorList>
    </citation>
    <scope>REVIEW ON NODULIN-LIKE PROTEINS</scope>
</reference>
<organism>
    <name type="scientific">Arabidopsis thaliana</name>
    <name type="common">Mouse-ear cress</name>
    <dbReference type="NCBI Taxonomy" id="3702"/>
    <lineage>
        <taxon>Eukaryota</taxon>
        <taxon>Viridiplantae</taxon>
        <taxon>Streptophyta</taxon>
        <taxon>Embryophyta</taxon>
        <taxon>Tracheophyta</taxon>
        <taxon>Spermatophyta</taxon>
        <taxon>Magnoliopsida</taxon>
        <taxon>eudicotyledons</taxon>
        <taxon>Gunneridae</taxon>
        <taxon>Pentapetalae</taxon>
        <taxon>rosids</taxon>
        <taxon>malvids</taxon>
        <taxon>Brassicales</taxon>
        <taxon>Brassicaceae</taxon>
        <taxon>Camelineae</taxon>
        <taxon>Arabidopsis</taxon>
    </lineage>
</organism>
<feature type="signal peptide" evidence="1">
    <location>
        <begin position="1"/>
        <end position="26"/>
    </location>
</feature>
<feature type="chain" id="PRO_5014313316" description="Early nodulin-like protein 19">
    <location>
        <begin position="27"/>
        <end position="141"/>
    </location>
</feature>
<feature type="domain" description="Phytocyanin" evidence="3">
    <location>
        <begin position="27"/>
        <end position="127"/>
    </location>
</feature>
<feature type="glycosylation site" description="N-linked (GlcNAc...) asparagine" evidence="2">
    <location>
        <position position="42"/>
    </location>
</feature>
<feature type="glycosylation site" description="N-linked (GlcNAc...) asparagine" evidence="2">
    <location>
        <position position="88"/>
    </location>
</feature>
<feature type="disulfide bond" evidence="3">
    <location>
        <begin position="80"/>
        <end position="115"/>
    </location>
</feature>
<comment type="function">
    <text evidence="5">May act as a carbohydrate transporter.</text>
</comment>
<comment type="similarity">
    <text evidence="6">Belongs to the early nodulin-like (ENODL) family.</text>
</comment>
<keyword id="KW-1015">Disulfide bond</keyword>
<keyword id="KW-0325">Glycoprotein</keyword>
<keyword id="KW-1185">Reference proteome</keyword>
<keyword id="KW-0732">Signal</keyword>
<dbReference type="EMBL" id="AL049640">
    <property type="protein sequence ID" value="CAB41005.1"/>
    <property type="molecule type" value="Genomic_DNA"/>
</dbReference>
<dbReference type="EMBL" id="AL161535">
    <property type="protein sequence ID" value="CAB78330.1"/>
    <property type="molecule type" value="Genomic_DNA"/>
</dbReference>
<dbReference type="EMBL" id="CP002687">
    <property type="protein sequence ID" value="AEE83198.1"/>
    <property type="molecule type" value="Genomic_DNA"/>
</dbReference>
<dbReference type="EMBL" id="AY072352">
    <property type="protein sequence ID" value="AAL62344.1"/>
    <property type="molecule type" value="mRNA"/>
</dbReference>
<dbReference type="EMBL" id="BT006527">
    <property type="protein sequence ID" value="AAP21335.1"/>
    <property type="molecule type" value="mRNA"/>
</dbReference>
<dbReference type="EMBL" id="AY088125">
    <property type="protein sequence ID" value="AAM65670.1"/>
    <property type="molecule type" value="mRNA"/>
</dbReference>
<dbReference type="PIR" id="T06646">
    <property type="entry name" value="T06646"/>
</dbReference>
<dbReference type="RefSeq" id="NP_193024.1">
    <property type="nucleotide sequence ID" value="NM_117357.5"/>
</dbReference>
<dbReference type="SMR" id="Q9STZ8"/>
<dbReference type="FunCoup" id="Q9STZ8">
    <property type="interactions" value="108"/>
</dbReference>
<dbReference type="IntAct" id="Q9STZ8">
    <property type="interactions" value="1"/>
</dbReference>
<dbReference type="STRING" id="3702.Q9STZ8"/>
<dbReference type="GlyGen" id="Q9STZ8">
    <property type="glycosylation" value="2 sites"/>
</dbReference>
<dbReference type="PaxDb" id="3702-AT4G12880.1"/>
<dbReference type="ProteomicsDB" id="183838"/>
<dbReference type="EnsemblPlants" id="AT4G12880.1">
    <property type="protein sequence ID" value="AT4G12880.1"/>
    <property type="gene ID" value="AT4G12880"/>
</dbReference>
<dbReference type="GeneID" id="826900"/>
<dbReference type="Gramene" id="AT4G12880.1">
    <property type="protein sequence ID" value="AT4G12880.1"/>
    <property type="gene ID" value="AT4G12880"/>
</dbReference>
<dbReference type="KEGG" id="ath:AT4G12880"/>
<dbReference type="Araport" id="AT4G12880"/>
<dbReference type="TAIR" id="AT4G12880">
    <property type="gene designation" value="ENODL19"/>
</dbReference>
<dbReference type="HOGENOM" id="CLU_058719_4_0_1"/>
<dbReference type="InParanoid" id="Q9STZ8"/>
<dbReference type="OMA" id="YDKCDAS"/>
<dbReference type="PRO" id="PR:Q9STZ8"/>
<dbReference type="Proteomes" id="UP000006548">
    <property type="component" value="Chromosome 4"/>
</dbReference>
<dbReference type="ExpressionAtlas" id="Q9STZ8">
    <property type="expression patterns" value="baseline and differential"/>
</dbReference>
<dbReference type="GO" id="GO:0048046">
    <property type="term" value="C:apoplast"/>
    <property type="evidence" value="ECO:0007005"/>
    <property type="project" value="TAIR"/>
</dbReference>
<dbReference type="GO" id="GO:0009055">
    <property type="term" value="F:electron transfer activity"/>
    <property type="evidence" value="ECO:0007669"/>
    <property type="project" value="InterPro"/>
</dbReference>
<dbReference type="FunFam" id="2.60.40.420:FF:000018">
    <property type="entry name" value="Lamin-like protein"/>
    <property type="match status" value="1"/>
</dbReference>
<dbReference type="Gene3D" id="2.60.40.420">
    <property type="entry name" value="Cupredoxins - blue copper proteins"/>
    <property type="match status" value="1"/>
</dbReference>
<dbReference type="InterPro" id="IPR008972">
    <property type="entry name" value="Cupredoxin"/>
</dbReference>
<dbReference type="InterPro" id="IPR039391">
    <property type="entry name" value="Phytocyanin-like"/>
</dbReference>
<dbReference type="InterPro" id="IPR003245">
    <property type="entry name" value="Phytocyanin_dom"/>
</dbReference>
<dbReference type="PANTHER" id="PTHR33021">
    <property type="entry name" value="BLUE COPPER PROTEIN"/>
    <property type="match status" value="1"/>
</dbReference>
<dbReference type="PANTHER" id="PTHR33021:SF285">
    <property type="entry name" value="EARLY NODULIN-LIKE PROTEIN 19"/>
    <property type="match status" value="1"/>
</dbReference>
<dbReference type="Pfam" id="PF02298">
    <property type="entry name" value="Cu_bind_like"/>
    <property type="match status" value="1"/>
</dbReference>
<dbReference type="SUPFAM" id="SSF49503">
    <property type="entry name" value="Cupredoxins"/>
    <property type="match status" value="1"/>
</dbReference>
<dbReference type="PROSITE" id="PS51485">
    <property type="entry name" value="PHYTOCYANIN"/>
    <property type="match status" value="1"/>
</dbReference>
<name>ENL19_ARATH</name>
<accession>Q9STZ8</accession>
<evidence type="ECO:0000255" key="1"/>
<evidence type="ECO:0000255" key="2">
    <source>
        <dbReference type="PROSITE-ProRule" id="PRU00498"/>
    </source>
</evidence>
<evidence type="ECO:0000255" key="3">
    <source>
        <dbReference type="PROSITE-ProRule" id="PRU00818"/>
    </source>
</evidence>
<evidence type="ECO:0000303" key="4">
    <source>
    </source>
</evidence>
<evidence type="ECO:0000303" key="5">
    <source>
    </source>
</evidence>
<evidence type="ECO:0000305" key="6"/>
<evidence type="ECO:0000312" key="7">
    <source>
        <dbReference type="Araport" id="AT4G12880"/>
    </source>
</evidence>
<evidence type="ECO:0000312" key="8">
    <source>
        <dbReference type="EMBL" id="CAB41005.1"/>
    </source>
</evidence>
<sequence length="141" mass="16133">MGRSMVLISAVVLAFLVAAPIPEVTAKKYLVGDKKFWNPNINYTLWAQGKHFYVGDWLYFVFYRDQHNILEVNKADYEKCISNRPIRNYTRGAGRDIVPLYETRRYYLLDGRGGCVQGMKLDVLVETPPPPPPFTPPPPAQ</sequence>
<gene>
    <name evidence="4" type="primary">ENODL19</name>
    <name evidence="4" type="synonym">EN19</name>
    <name evidence="7" type="ordered locus">At4g12880</name>
    <name evidence="8" type="ORF">T20K18.230</name>
</gene>
<protein>
    <recommendedName>
        <fullName evidence="4">Early nodulin-like protein 19</fullName>
        <shortName evidence="4">AtENODL19</shortName>
    </recommendedName>
    <alternativeName>
        <fullName evidence="6">Phytocyanin-like protein ENODL19</fullName>
    </alternativeName>
</protein>
<proteinExistence type="evidence at transcript level"/>